<name>MCTB_MYCTO</name>
<keyword id="KW-0998">Cell outer membrane</keyword>
<keyword id="KW-0186">Copper</keyword>
<keyword id="KW-0406">Ion transport</keyword>
<keyword id="KW-0472">Membrane</keyword>
<keyword id="KW-0626">Porin</keyword>
<keyword id="KW-1185">Reference proteome</keyword>
<keyword id="KW-0732">Signal</keyword>
<keyword id="KW-0812">Transmembrane</keyword>
<keyword id="KW-0813">Transport</keyword>
<gene>
    <name type="primary">mctB</name>
    <name type="ordered locus">MT1737</name>
</gene>
<protein>
    <recommendedName>
        <fullName>Copper transporter MctB</fullName>
    </recommendedName>
    <alternativeName>
        <fullName>Mycobacterial copper transport protein B</fullName>
    </alternativeName>
</protein>
<feature type="signal peptide" evidence="2">
    <location>
        <begin position="1"/>
        <end position="30"/>
    </location>
</feature>
<feature type="chain" id="PRO_0000427875" description="Copper transporter MctB">
    <location>
        <begin position="31"/>
        <end position="314"/>
    </location>
</feature>
<comment type="function">
    <text evidence="1">Pore-forming protein, which is involved in efflux of copper across the outer membrane. Essential for copper resistance and maintenance of a low intracellular copper concentration. Required for virulence (By similarity).</text>
</comment>
<comment type="subcellular location">
    <subcellularLocation>
        <location evidence="1">Cell outer membrane</location>
    </subcellularLocation>
</comment>
<comment type="similarity">
    <text evidence="3">Belongs to the MctB (TC 1.B.50) family.</text>
</comment>
<comment type="sequence caution" evidence="3">
    <conflict type="erroneous initiation">
        <sequence resource="EMBL-CDS" id="AAK46006"/>
    </conflict>
    <text>Extended N-terminus.</text>
</comment>
<sequence length="314" mass="32391">MISLRQHAVSLAAVFLALAMGVVLGSGFFSDTLLSSLRSEKRDLYTQIDRLTDQRDALREKLSAADNFDIQVGSRIVHDALVGKSVVIFRTPDAHDDDIAAVSKIVGQAGGAVTATVSLTQEFVEANSAEKLRSVVNSSILPAGSQLSTKLVDQGSQAGDLLGIALLSNADPAAPTVEQAQRDTVLAALRETGFITYQPRDRIGTANATVVVTGGALSTDAGNQGVSVARFAAALAPRGSGTLLAGRDGSANRPAAVAVTRADADMAAEISTVDDIDAEPGRITVILALHDLINGGHVGHYGTGHGAMSVTVSQ</sequence>
<proteinExistence type="inferred from homology"/>
<accession>P9WJ82</accession>
<accession>L0TAD1</accession>
<accession>P58212</accession>
<accession>P64883</accession>
<organism>
    <name type="scientific">Mycobacterium tuberculosis (strain CDC 1551 / Oshkosh)</name>
    <dbReference type="NCBI Taxonomy" id="83331"/>
    <lineage>
        <taxon>Bacteria</taxon>
        <taxon>Bacillati</taxon>
        <taxon>Actinomycetota</taxon>
        <taxon>Actinomycetes</taxon>
        <taxon>Mycobacteriales</taxon>
        <taxon>Mycobacteriaceae</taxon>
        <taxon>Mycobacterium</taxon>
        <taxon>Mycobacterium tuberculosis complex</taxon>
    </lineage>
</organism>
<reference key="1">
    <citation type="journal article" date="2002" name="J. Bacteriol.">
        <title>Whole-genome comparison of Mycobacterium tuberculosis clinical and laboratory strains.</title>
        <authorList>
            <person name="Fleischmann R.D."/>
            <person name="Alland D."/>
            <person name="Eisen J.A."/>
            <person name="Carpenter L."/>
            <person name="White O."/>
            <person name="Peterson J.D."/>
            <person name="DeBoy R.T."/>
            <person name="Dodson R.J."/>
            <person name="Gwinn M.L."/>
            <person name="Haft D.H."/>
            <person name="Hickey E.K."/>
            <person name="Kolonay J.F."/>
            <person name="Nelson W.C."/>
            <person name="Umayam L.A."/>
            <person name="Ermolaeva M.D."/>
            <person name="Salzberg S.L."/>
            <person name="Delcher A."/>
            <person name="Utterback T.R."/>
            <person name="Weidman J.F."/>
            <person name="Khouri H.M."/>
            <person name="Gill J."/>
            <person name="Mikula A."/>
            <person name="Bishai W."/>
            <person name="Jacobs W.R. Jr."/>
            <person name="Venter J.C."/>
            <person name="Fraser C.M."/>
        </authorList>
    </citation>
    <scope>NUCLEOTIDE SEQUENCE [LARGE SCALE GENOMIC DNA]</scope>
    <source>
        <strain>CDC 1551 / Oshkosh</strain>
    </source>
</reference>
<dbReference type="EMBL" id="AE000516">
    <property type="protein sequence ID" value="AAK46006.1"/>
    <property type="status" value="ALT_INIT"/>
    <property type="molecule type" value="Genomic_DNA"/>
</dbReference>
<dbReference type="PIR" id="A70503">
    <property type="entry name" value="A70503"/>
</dbReference>
<dbReference type="RefSeq" id="WP_003408390.1">
    <property type="nucleotide sequence ID" value="NZ_KK341227.1"/>
</dbReference>
<dbReference type="SMR" id="P9WJ82"/>
<dbReference type="KEGG" id="mtc:MT1737"/>
<dbReference type="PATRIC" id="fig|83331.31.peg.1865"/>
<dbReference type="HOGENOM" id="CLU_072020_0_1_11"/>
<dbReference type="Proteomes" id="UP000001020">
    <property type="component" value="Chromosome"/>
</dbReference>
<dbReference type="GO" id="GO:0009279">
    <property type="term" value="C:cell outer membrane"/>
    <property type="evidence" value="ECO:0007669"/>
    <property type="project" value="UniProtKB-SubCell"/>
</dbReference>
<dbReference type="GO" id="GO:0046930">
    <property type="term" value="C:pore complex"/>
    <property type="evidence" value="ECO:0007669"/>
    <property type="project" value="UniProtKB-KW"/>
</dbReference>
<dbReference type="GO" id="GO:0015288">
    <property type="term" value="F:porin activity"/>
    <property type="evidence" value="ECO:0007669"/>
    <property type="project" value="UniProtKB-KW"/>
</dbReference>
<dbReference type="GO" id="GO:0055070">
    <property type="term" value="P:copper ion homeostasis"/>
    <property type="evidence" value="ECO:0007669"/>
    <property type="project" value="InterPro"/>
</dbReference>
<dbReference type="GO" id="GO:0006811">
    <property type="term" value="P:monoatomic ion transport"/>
    <property type="evidence" value="ECO:0007669"/>
    <property type="project" value="UniProtKB-KW"/>
</dbReference>
<dbReference type="InterPro" id="IPR021522">
    <property type="entry name" value="MctB"/>
</dbReference>
<dbReference type="Pfam" id="PF11382">
    <property type="entry name" value="MctB"/>
    <property type="match status" value="1"/>
</dbReference>
<evidence type="ECO:0000250" key="1"/>
<evidence type="ECO:0000255" key="2"/>
<evidence type="ECO:0000305" key="3"/>